<protein>
    <recommendedName>
        <fullName evidence="1">Thiol:disulfide interchange protein DsbD</fullName>
        <ecNumber evidence="1">1.8.1.8</ecNumber>
    </recommendedName>
    <alternativeName>
        <fullName evidence="1">Protein-disulfide reductase</fullName>
        <shortName evidence="1">Disulfide reductase</shortName>
    </alternativeName>
</protein>
<dbReference type="EC" id="1.8.1.8" evidence="1"/>
<dbReference type="EMBL" id="CP000026">
    <property type="protein sequence ID" value="AAV79880.1"/>
    <property type="molecule type" value="Genomic_DNA"/>
</dbReference>
<dbReference type="RefSeq" id="WP_000068892.1">
    <property type="nucleotide sequence ID" value="NC_006511.1"/>
</dbReference>
<dbReference type="SMR" id="Q5PIQ0"/>
<dbReference type="KEGG" id="spt:SPA4139"/>
<dbReference type="HOGENOM" id="CLU_014657_3_0_6"/>
<dbReference type="Proteomes" id="UP000008185">
    <property type="component" value="Chromosome"/>
</dbReference>
<dbReference type="GO" id="GO:0005886">
    <property type="term" value="C:plasma membrane"/>
    <property type="evidence" value="ECO:0007669"/>
    <property type="project" value="UniProtKB-SubCell"/>
</dbReference>
<dbReference type="GO" id="GO:0009055">
    <property type="term" value="F:electron transfer activity"/>
    <property type="evidence" value="ECO:0007669"/>
    <property type="project" value="UniProtKB-UniRule"/>
</dbReference>
<dbReference type="GO" id="GO:0047134">
    <property type="term" value="F:protein-disulfide reductase [NAD(P)H] activity"/>
    <property type="evidence" value="ECO:0007669"/>
    <property type="project" value="UniProtKB-UniRule"/>
</dbReference>
<dbReference type="GO" id="GO:0045454">
    <property type="term" value="P:cell redox homeostasis"/>
    <property type="evidence" value="ECO:0007669"/>
    <property type="project" value="TreeGrafter"/>
</dbReference>
<dbReference type="GO" id="GO:0017004">
    <property type="term" value="P:cytochrome complex assembly"/>
    <property type="evidence" value="ECO:0007669"/>
    <property type="project" value="UniProtKB-UniRule"/>
</dbReference>
<dbReference type="CDD" id="cd02953">
    <property type="entry name" value="DsbDgamma"/>
    <property type="match status" value="1"/>
</dbReference>
<dbReference type="FunFam" id="2.60.40.1250:FF:000001">
    <property type="entry name" value="Thiol:disulfide interchange protein DsbD"/>
    <property type="match status" value="1"/>
</dbReference>
<dbReference type="FunFam" id="3.40.30.10:FF:000116">
    <property type="entry name" value="Thiol:disulfide interchange protein DsbD"/>
    <property type="match status" value="1"/>
</dbReference>
<dbReference type="Gene3D" id="3.40.30.10">
    <property type="entry name" value="Glutaredoxin"/>
    <property type="match status" value="1"/>
</dbReference>
<dbReference type="Gene3D" id="2.60.40.1250">
    <property type="entry name" value="Thiol:disulfide interchange protein DsbD, N-terminal domain"/>
    <property type="match status" value="1"/>
</dbReference>
<dbReference type="HAMAP" id="MF_00399">
    <property type="entry name" value="DbsD"/>
    <property type="match status" value="1"/>
</dbReference>
<dbReference type="InterPro" id="IPR003834">
    <property type="entry name" value="Cyt_c_assmbl_TM_dom"/>
</dbReference>
<dbReference type="InterPro" id="IPR035671">
    <property type="entry name" value="DsbD_gamma"/>
</dbReference>
<dbReference type="InterPro" id="IPR028250">
    <property type="entry name" value="DsbDN"/>
</dbReference>
<dbReference type="InterPro" id="IPR036929">
    <property type="entry name" value="DsbDN_sf"/>
</dbReference>
<dbReference type="InterPro" id="IPR022910">
    <property type="entry name" value="Thiol_diS_interchange_DbsD"/>
</dbReference>
<dbReference type="InterPro" id="IPR036249">
    <property type="entry name" value="Thioredoxin-like_sf"/>
</dbReference>
<dbReference type="InterPro" id="IPR017937">
    <property type="entry name" value="Thioredoxin_CS"/>
</dbReference>
<dbReference type="InterPro" id="IPR013766">
    <property type="entry name" value="Thioredoxin_domain"/>
</dbReference>
<dbReference type="NCBIfam" id="NF001419">
    <property type="entry name" value="PRK00293.1"/>
    <property type="match status" value="1"/>
</dbReference>
<dbReference type="PANTHER" id="PTHR32234">
    <property type="entry name" value="THIOL:DISULFIDE INTERCHANGE PROTEIN DSBD"/>
    <property type="match status" value="1"/>
</dbReference>
<dbReference type="PANTHER" id="PTHR32234:SF0">
    <property type="entry name" value="THIOL:DISULFIDE INTERCHANGE PROTEIN DSBD"/>
    <property type="match status" value="1"/>
</dbReference>
<dbReference type="Pfam" id="PF11412">
    <property type="entry name" value="DsbD_N"/>
    <property type="match status" value="1"/>
</dbReference>
<dbReference type="Pfam" id="PF02683">
    <property type="entry name" value="DsbD_TM"/>
    <property type="match status" value="1"/>
</dbReference>
<dbReference type="Pfam" id="PF13899">
    <property type="entry name" value="Thioredoxin_7"/>
    <property type="match status" value="1"/>
</dbReference>
<dbReference type="SUPFAM" id="SSF74863">
    <property type="entry name" value="Thiol:disulfide interchange protein DsbD, N-terminal domain (DsbD-alpha)"/>
    <property type="match status" value="1"/>
</dbReference>
<dbReference type="SUPFAM" id="SSF52833">
    <property type="entry name" value="Thioredoxin-like"/>
    <property type="match status" value="1"/>
</dbReference>
<dbReference type="PROSITE" id="PS00194">
    <property type="entry name" value="THIOREDOXIN_1"/>
    <property type="match status" value="1"/>
</dbReference>
<dbReference type="PROSITE" id="PS51352">
    <property type="entry name" value="THIOREDOXIN_2"/>
    <property type="match status" value="1"/>
</dbReference>
<organism>
    <name type="scientific">Salmonella paratyphi A (strain ATCC 9150 / SARB42)</name>
    <dbReference type="NCBI Taxonomy" id="295319"/>
    <lineage>
        <taxon>Bacteria</taxon>
        <taxon>Pseudomonadati</taxon>
        <taxon>Pseudomonadota</taxon>
        <taxon>Gammaproteobacteria</taxon>
        <taxon>Enterobacterales</taxon>
        <taxon>Enterobacteriaceae</taxon>
        <taxon>Salmonella</taxon>
    </lineage>
</organism>
<name>DSBD_SALPA</name>
<proteinExistence type="inferred from homology"/>
<feature type="signal peptide" evidence="1">
    <location>
        <begin position="1"/>
        <end position="19"/>
    </location>
</feature>
<feature type="chain" id="PRO_0000304395" description="Thiol:disulfide interchange protein DsbD">
    <location>
        <begin position="20"/>
        <end position="567"/>
    </location>
</feature>
<feature type="transmembrane region" description="Helical" evidence="1">
    <location>
        <begin position="166"/>
        <end position="186"/>
    </location>
</feature>
<feature type="transmembrane region" description="Helical" evidence="1">
    <location>
        <begin position="211"/>
        <end position="231"/>
    </location>
</feature>
<feature type="transmembrane region" description="Helical" evidence="1">
    <location>
        <begin position="246"/>
        <end position="266"/>
    </location>
</feature>
<feature type="transmembrane region" description="Helical" evidence="1">
    <location>
        <begin position="299"/>
        <end position="319"/>
    </location>
</feature>
<feature type="transmembrane region" description="Helical" evidence="1">
    <location>
        <begin position="326"/>
        <end position="346"/>
    </location>
</feature>
<feature type="transmembrane region" description="Helical" evidence="1">
    <location>
        <begin position="360"/>
        <end position="380"/>
    </location>
</feature>
<feature type="transmembrane region" description="Helical" evidence="1">
    <location>
        <begin position="387"/>
        <end position="407"/>
    </location>
</feature>
<feature type="transmembrane region" description="Helical" evidence="1">
    <location>
        <begin position="418"/>
        <end position="438"/>
    </location>
</feature>
<feature type="domain" description="Thioredoxin" evidence="1">
    <location>
        <begin position="435"/>
        <end position="567"/>
    </location>
</feature>
<feature type="disulfide bond" description="Redox-active" evidence="1">
    <location>
        <begin position="122"/>
        <end position="128"/>
    </location>
</feature>
<feature type="disulfide bond" description="Redox-active" evidence="1">
    <location>
        <begin position="185"/>
        <end position="307"/>
    </location>
</feature>
<feature type="disulfide bond" description="Redox-active" evidence="1">
    <location>
        <begin position="482"/>
        <end position="485"/>
    </location>
</feature>
<gene>
    <name evidence="1" type="primary">dsbD</name>
    <name type="ordered locus">SPA4139</name>
</gene>
<sequence length="567" mass="61314">MAQRIFTLILLLCSTSAFAGLFDAPGRSQFVPADRAFVFDFQQNQHDLTLSWQVKEGYYLYRKQISITPTKADIAAVQLPAGVWHEDEFYGKSEIYRKRLNVPVTVNQAAAGATLTVTYQGCADAGFCYPPETKTVPLSEVAAAIDATPTPAVTQTGETSKPAAQLPFSALWALLIGIGIAFTPCVLPMYPLISGIVLGGRQRLSTGRALLLAFIYVQGMALTYTALGLVVAAAGLQFQAALQHPYVLIGLAIVFTLLALSMFGLFTLQLPSSLQTRLTLMSNRQQGGSPGGVFVMGAIAGLICSPCTTAPLSAILLYIAQSGNMWLGGGTLYLYALGMGLPLMLVTVFGNRLLPKSGPWMAHVKTAFGFVILALPVFLLERIIGEAWGLRLWSLLGVAFFGWAFITSLQARRAWMRIVQIILLAAALISVRPLQDWAFGSPSAQAPAHLNFTAISTVDELNQALAQAKGKPVMLDFYADWCVACKEFEKYTFSDPRVQQALGDTVLLQANVTANNAQDVALLKHLQVLGLPTILFFDAQGQEQPQARVTGFMDAATFSAHLHDRQP</sequence>
<evidence type="ECO:0000255" key="1">
    <source>
        <dbReference type="HAMAP-Rule" id="MF_00399"/>
    </source>
</evidence>
<accession>Q5PIQ0</accession>
<reference key="1">
    <citation type="journal article" date="2004" name="Nat. Genet.">
        <title>Comparison of genome degradation in Paratyphi A and Typhi, human-restricted serovars of Salmonella enterica that cause typhoid.</title>
        <authorList>
            <person name="McClelland M."/>
            <person name="Sanderson K.E."/>
            <person name="Clifton S.W."/>
            <person name="Latreille P."/>
            <person name="Porwollik S."/>
            <person name="Sabo A."/>
            <person name="Meyer R."/>
            <person name="Bieri T."/>
            <person name="Ozersky P."/>
            <person name="McLellan M."/>
            <person name="Harkins C.R."/>
            <person name="Wang C."/>
            <person name="Nguyen C."/>
            <person name="Berghoff A."/>
            <person name="Elliott G."/>
            <person name="Kohlberg S."/>
            <person name="Strong C."/>
            <person name="Du F."/>
            <person name="Carter J."/>
            <person name="Kremizki C."/>
            <person name="Layman D."/>
            <person name="Leonard S."/>
            <person name="Sun H."/>
            <person name="Fulton L."/>
            <person name="Nash W."/>
            <person name="Miner T."/>
            <person name="Minx P."/>
            <person name="Delehaunty K."/>
            <person name="Fronick C."/>
            <person name="Magrini V."/>
            <person name="Nhan M."/>
            <person name="Warren W."/>
            <person name="Florea L."/>
            <person name="Spieth J."/>
            <person name="Wilson R.K."/>
        </authorList>
    </citation>
    <scope>NUCLEOTIDE SEQUENCE [LARGE SCALE GENOMIC DNA]</scope>
    <source>
        <strain>ATCC 9150 / SARB42</strain>
    </source>
</reference>
<comment type="function">
    <text evidence="1">Required to facilitate the formation of correct disulfide bonds in some periplasmic proteins and for the assembly of the periplasmic c-type cytochromes. Acts by transferring electrons from cytoplasmic thioredoxin to the periplasm. This transfer involves a cascade of disulfide bond formation and reduction steps.</text>
</comment>
<comment type="catalytic activity">
    <reaction evidence="1">
        <text>[protein]-dithiol + NAD(+) = [protein]-disulfide + NADH + H(+)</text>
        <dbReference type="Rhea" id="RHEA:18749"/>
        <dbReference type="Rhea" id="RHEA-COMP:10593"/>
        <dbReference type="Rhea" id="RHEA-COMP:10594"/>
        <dbReference type="ChEBI" id="CHEBI:15378"/>
        <dbReference type="ChEBI" id="CHEBI:29950"/>
        <dbReference type="ChEBI" id="CHEBI:50058"/>
        <dbReference type="ChEBI" id="CHEBI:57540"/>
        <dbReference type="ChEBI" id="CHEBI:57945"/>
        <dbReference type="EC" id="1.8.1.8"/>
    </reaction>
</comment>
<comment type="catalytic activity">
    <reaction evidence="1">
        <text>[protein]-dithiol + NADP(+) = [protein]-disulfide + NADPH + H(+)</text>
        <dbReference type="Rhea" id="RHEA:18753"/>
        <dbReference type="Rhea" id="RHEA-COMP:10593"/>
        <dbReference type="Rhea" id="RHEA-COMP:10594"/>
        <dbReference type="ChEBI" id="CHEBI:15378"/>
        <dbReference type="ChEBI" id="CHEBI:29950"/>
        <dbReference type="ChEBI" id="CHEBI:50058"/>
        <dbReference type="ChEBI" id="CHEBI:57783"/>
        <dbReference type="ChEBI" id="CHEBI:58349"/>
        <dbReference type="EC" id="1.8.1.8"/>
    </reaction>
</comment>
<comment type="subcellular location">
    <subcellularLocation>
        <location evidence="1">Cell inner membrane</location>
        <topology evidence="1">Multi-pass membrane protein</topology>
    </subcellularLocation>
</comment>
<comment type="similarity">
    <text evidence="1">Belongs to the thioredoxin family. DsbD subfamily.</text>
</comment>
<keyword id="KW-0997">Cell inner membrane</keyword>
<keyword id="KW-1003">Cell membrane</keyword>
<keyword id="KW-0201">Cytochrome c-type biogenesis</keyword>
<keyword id="KW-1015">Disulfide bond</keyword>
<keyword id="KW-0249">Electron transport</keyword>
<keyword id="KW-0472">Membrane</keyword>
<keyword id="KW-0520">NAD</keyword>
<keyword id="KW-0560">Oxidoreductase</keyword>
<keyword id="KW-0676">Redox-active center</keyword>
<keyword id="KW-0732">Signal</keyword>
<keyword id="KW-0812">Transmembrane</keyword>
<keyword id="KW-1133">Transmembrane helix</keyword>
<keyword id="KW-0813">Transport</keyword>